<gene>
    <name type="primary">MT-CO2</name>
    <name type="synonym">COII</name>
    <name type="synonym">COXII</name>
    <name type="synonym">MTCO2</name>
</gene>
<evidence type="ECO:0000250" key="1">
    <source>
        <dbReference type="UniProtKB" id="P00403"/>
    </source>
</evidence>
<evidence type="ECO:0000250" key="2">
    <source>
        <dbReference type="UniProtKB" id="P00410"/>
    </source>
</evidence>
<evidence type="ECO:0000250" key="3">
    <source>
        <dbReference type="UniProtKB" id="P68530"/>
    </source>
</evidence>
<evidence type="ECO:0000305" key="4"/>
<reference key="1">
    <citation type="book" date="1997" name="Avian molecular evolution and systematics">
        <title>Phylogenetic relationships of the ratite birds: resolving conflicts between molecular and morphological data sets.</title>
        <editorList>
            <person name="Mindell D.P."/>
        </editorList>
        <authorList>
            <person name="Lee K."/>
            <person name="Feinstein J."/>
            <person name="Cracraft J."/>
        </authorList>
    </citation>
    <scope>NUCLEOTIDE SEQUENCE [GENOMIC DNA]</scope>
</reference>
<name>COX2_TINMA</name>
<dbReference type="EC" id="7.1.1.9"/>
<dbReference type="EMBL" id="U76070">
    <property type="protein sequence ID" value="AAB61332.1"/>
    <property type="molecule type" value="Genomic_DNA"/>
</dbReference>
<dbReference type="SMR" id="O03895"/>
<dbReference type="GO" id="GO:0005743">
    <property type="term" value="C:mitochondrial inner membrane"/>
    <property type="evidence" value="ECO:0007669"/>
    <property type="project" value="UniProtKB-SubCell"/>
</dbReference>
<dbReference type="GO" id="GO:0045277">
    <property type="term" value="C:respiratory chain complex IV"/>
    <property type="evidence" value="ECO:0000250"/>
    <property type="project" value="UniProtKB"/>
</dbReference>
<dbReference type="GO" id="GO:0005507">
    <property type="term" value="F:copper ion binding"/>
    <property type="evidence" value="ECO:0007669"/>
    <property type="project" value="InterPro"/>
</dbReference>
<dbReference type="GO" id="GO:0004129">
    <property type="term" value="F:cytochrome-c oxidase activity"/>
    <property type="evidence" value="ECO:0007669"/>
    <property type="project" value="UniProtKB-EC"/>
</dbReference>
<dbReference type="GO" id="GO:0042773">
    <property type="term" value="P:ATP synthesis coupled electron transport"/>
    <property type="evidence" value="ECO:0007669"/>
    <property type="project" value="TreeGrafter"/>
</dbReference>
<dbReference type="CDD" id="cd13912">
    <property type="entry name" value="CcO_II_C"/>
    <property type="match status" value="1"/>
</dbReference>
<dbReference type="FunFam" id="2.60.40.420:FF:000001">
    <property type="entry name" value="Cytochrome c oxidase subunit 2"/>
    <property type="match status" value="1"/>
</dbReference>
<dbReference type="Gene3D" id="1.10.287.90">
    <property type="match status" value="1"/>
</dbReference>
<dbReference type="Gene3D" id="2.60.40.420">
    <property type="entry name" value="Cupredoxins - blue copper proteins"/>
    <property type="match status" value="1"/>
</dbReference>
<dbReference type="InterPro" id="IPR045187">
    <property type="entry name" value="CcO_II"/>
</dbReference>
<dbReference type="InterPro" id="IPR002429">
    <property type="entry name" value="CcO_II-like_C"/>
</dbReference>
<dbReference type="InterPro" id="IPR034210">
    <property type="entry name" value="CcO_II_C"/>
</dbReference>
<dbReference type="InterPro" id="IPR001505">
    <property type="entry name" value="Copper_CuA"/>
</dbReference>
<dbReference type="InterPro" id="IPR008972">
    <property type="entry name" value="Cupredoxin"/>
</dbReference>
<dbReference type="InterPro" id="IPR014222">
    <property type="entry name" value="Cyt_c_oxidase_su2"/>
</dbReference>
<dbReference type="InterPro" id="IPR011759">
    <property type="entry name" value="Cyt_c_oxidase_su2_TM_dom"/>
</dbReference>
<dbReference type="InterPro" id="IPR036257">
    <property type="entry name" value="Cyt_c_oxidase_su2_TM_sf"/>
</dbReference>
<dbReference type="NCBIfam" id="TIGR02866">
    <property type="entry name" value="CoxB"/>
    <property type="match status" value="1"/>
</dbReference>
<dbReference type="PANTHER" id="PTHR22888:SF9">
    <property type="entry name" value="CYTOCHROME C OXIDASE SUBUNIT 2"/>
    <property type="match status" value="1"/>
</dbReference>
<dbReference type="PANTHER" id="PTHR22888">
    <property type="entry name" value="CYTOCHROME C OXIDASE, SUBUNIT II"/>
    <property type="match status" value="1"/>
</dbReference>
<dbReference type="Pfam" id="PF00116">
    <property type="entry name" value="COX2"/>
    <property type="match status" value="1"/>
</dbReference>
<dbReference type="Pfam" id="PF02790">
    <property type="entry name" value="COX2_TM"/>
    <property type="match status" value="1"/>
</dbReference>
<dbReference type="PRINTS" id="PR01166">
    <property type="entry name" value="CYCOXIDASEII"/>
</dbReference>
<dbReference type="SUPFAM" id="SSF49503">
    <property type="entry name" value="Cupredoxins"/>
    <property type="match status" value="1"/>
</dbReference>
<dbReference type="SUPFAM" id="SSF81464">
    <property type="entry name" value="Cytochrome c oxidase subunit II-like, transmembrane region"/>
    <property type="match status" value="1"/>
</dbReference>
<dbReference type="PROSITE" id="PS00078">
    <property type="entry name" value="COX2"/>
    <property type="match status" value="1"/>
</dbReference>
<dbReference type="PROSITE" id="PS50857">
    <property type="entry name" value="COX2_CUA"/>
    <property type="match status" value="1"/>
</dbReference>
<dbReference type="PROSITE" id="PS50999">
    <property type="entry name" value="COX2_TM"/>
    <property type="match status" value="1"/>
</dbReference>
<keyword id="KW-0186">Copper</keyword>
<keyword id="KW-0249">Electron transport</keyword>
<keyword id="KW-0460">Magnesium</keyword>
<keyword id="KW-0472">Membrane</keyword>
<keyword id="KW-0479">Metal-binding</keyword>
<keyword id="KW-0496">Mitochondrion</keyword>
<keyword id="KW-0999">Mitochondrion inner membrane</keyword>
<keyword id="KW-0679">Respiratory chain</keyword>
<keyword id="KW-1278">Translocase</keyword>
<keyword id="KW-0812">Transmembrane</keyword>
<keyword id="KW-1133">Transmembrane helix</keyword>
<keyword id="KW-0813">Transport</keyword>
<sequence>AICSLVLYLLTLMLMEKLSSNTVDAQEVELIWTILPAIVLILLALPSLQILYMMDEIDEPDLTLKAIGHQWYWSYEYTDFKDLSFDSYMIPTPDLPTGYFRLLEVDNRVVIPMESPIRMIITAADVLHSWAVPTLGVKTDAIPGRLNQTSFITTRPGIFYGQCSEICGANHSFMPIVVESTPLPHFESWSSLLSTSSL</sequence>
<organism>
    <name type="scientific">Tinamus major</name>
    <name type="common">Great tinamou</name>
    <name type="synonym">Tetrao major</name>
    <dbReference type="NCBI Taxonomy" id="30468"/>
    <lineage>
        <taxon>Eukaryota</taxon>
        <taxon>Metazoa</taxon>
        <taxon>Chordata</taxon>
        <taxon>Craniata</taxon>
        <taxon>Vertebrata</taxon>
        <taxon>Euteleostomi</taxon>
        <taxon>Archelosauria</taxon>
        <taxon>Archosauria</taxon>
        <taxon>Dinosauria</taxon>
        <taxon>Saurischia</taxon>
        <taxon>Theropoda</taxon>
        <taxon>Coelurosauria</taxon>
        <taxon>Aves</taxon>
        <taxon>Palaeognathae</taxon>
        <taxon>Tinamiformes</taxon>
        <taxon>Tinamidae</taxon>
        <taxon>Tinamus</taxon>
    </lineage>
</organism>
<feature type="chain" id="PRO_0000183704" description="Cytochrome c oxidase subunit 2">
    <location>
        <begin position="1" status="less than"/>
        <end position="198"/>
    </location>
</feature>
<feature type="transmembrane region" description="Helical; Name=I" evidence="3">
    <location>
        <begin position="1" status="less than"/>
        <end position="13"/>
    </location>
</feature>
<feature type="topological domain" description="Mitochondrial matrix" evidence="3">
    <location>
        <begin position="14"/>
        <end position="26"/>
    </location>
</feature>
<feature type="transmembrane region" description="Helical; Name=II" evidence="3">
    <location>
        <begin position="27"/>
        <end position="54"/>
    </location>
</feature>
<feature type="topological domain" description="Mitochondrial intermembrane" evidence="3">
    <location>
        <begin position="55"/>
        <end position="198"/>
    </location>
</feature>
<feature type="binding site" evidence="3">
    <location>
        <position position="128"/>
    </location>
    <ligand>
        <name>Cu cation</name>
        <dbReference type="ChEBI" id="CHEBI:23378"/>
        <label>A1</label>
    </ligand>
</feature>
<feature type="binding site" evidence="3">
    <location>
        <position position="163"/>
    </location>
    <ligand>
        <name>Cu cation</name>
        <dbReference type="ChEBI" id="CHEBI:23378"/>
        <label>A1</label>
    </ligand>
</feature>
<feature type="binding site" evidence="3">
    <location>
        <position position="163"/>
    </location>
    <ligand>
        <name>Cu cation</name>
        <dbReference type="ChEBI" id="CHEBI:23378"/>
        <label>A2</label>
    </ligand>
</feature>
<feature type="binding site" evidence="3">
    <location>
        <position position="165"/>
    </location>
    <ligand>
        <name>Cu cation</name>
        <dbReference type="ChEBI" id="CHEBI:23378"/>
        <label>A2</label>
    </ligand>
</feature>
<feature type="binding site" evidence="3">
    <location>
        <position position="165"/>
    </location>
    <ligand>
        <name>Mg(2+)</name>
        <dbReference type="ChEBI" id="CHEBI:18420"/>
        <note>ligand shared with MT-CO1</note>
    </ligand>
</feature>
<feature type="binding site" evidence="3">
    <location>
        <position position="167"/>
    </location>
    <ligand>
        <name>Cu cation</name>
        <dbReference type="ChEBI" id="CHEBI:23378"/>
        <label>A1</label>
    </ligand>
</feature>
<feature type="binding site" evidence="3">
    <location>
        <position position="167"/>
    </location>
    <ligand>
        <name>Cu cation</name>
        <dbReference type="ChEBI" id="CHEBI:23378"/>
        <label>A2</label>
    </ligand>
</feature>
<feature type="binding site" evidence="3">
    <location>
        <position position="171"/>
    </location>
    <ligand>
        <name>Cu cation</name>
        <dbReference type="ChEBI" id="CHEBI:23378"/>
        <label>A2</label>
    </ligand>
</feature>
<feature type="binding site" evidence="3">
    <location>
        <position position="174"/>
    </location>
    <ligand>
        <name>Cu cation</name>
        <dbReference type="ChEBI" id="CHEBI:23378"/>
        <label>A1</label>
    </ligand>
</feature>
<feature type="non-terminal residue">
    <location>
        <position position="1"/>
    </location>
</feature>
<proteinExistence type="inferred from homology"/>
<geneLocation type="mitochondrion"/>
<protein>
    <recommendedName>
        <fullName>Cytochrome c oxidase subunit 2</fullName>
        <ecNumber>7.1.1.9</ecNumber>
    </recommendedName>
    <alternativeName>
        <fullName>Cytochrome c oxidase polypeptide II</fullName>
    </alternativeName>
</protein>
<accession>O03895</accession>
<comment type="function">
    <text evidence="2">Component of the cytochrome c oxidase, the last enzyme in the mitochondrial electron transport chain which drives oxidative phosphorylation. The respiratory chain contains 3 multisubunit complexes succinate dehydrogenase (complex II, CII), ubiquinol-cytochrome c oxidoreductase (cytochrome b-c1 complex, complex III, CIII) and cytochrome c oxidase (complex IV, CIV), that cooperate to transfer electrons derived from NADH and succinate to molecular oxygen, creating an electrochemical gradient over the inner membrane that drives transmembrane transport and the ATP synthase. Cytochrome c oxidase is the component of the respiratory chain that catalyzes the reduction of oxygen to water. Electrons originating from reduced cytochrome c in the intermembrane space (IMS) are transferred via the dinuclear copper A center (CU(A)) of subunit 2 and heme A of subunit 1 to the active site in subunit 1, a binuclear center (BNC) formed by heme A3 and copper B (CU(B)). The BNC reduces molecular oxygen to 2 water molecules using 4 electrons from cytochrome c in the IMS and 4 protons from the mitochondrial matrix.</text>
</comment>
<comment type="catalytic activity">
    <reaction evidence="2">
        <text>4 Fe(II)-[cytochrome c] + O2 + 8 H(+)(in) = 4 Fe(III)-[cytochrome c] + 2 H2O + 4 H(+)(out)</text>
        <dbReference type="Rhea" id="RHEA:11436"/>
        <dbReference type="Rhea" id="RHEA-COMP:10350"/>
        <dbReference type="Rhea" id="RHEA-COMP:14399"/>
        <dbReference type="ChEBI" id="CHEBI:15377"/>
        <dbReference type="ChEBI" id="CHEBI:15378"/>
        <dbReference type="ChEBI" id="CHEBI:15379"/>
        <dbReference type="ChEBI" id="CHEBI:29033"/>
        <dbReference type="ChEBI" id="CHEBI:29034"/>
        <dbReference type="EC" id="7.1.1.9"/>
    </reaction>
    <physiologicalReaction direction="left-to-right" evidence="2">
        <dbReference type="Rhea" id="RHEA:11437"/>
    </physiologicalReaction>
</comment>
<comment type="cofactor">
    <cofactor evidence="3">
        <name>Cu cation</name>
        <dbReference type="ChEBI" id="CHEBI:23378"/>
    </cofactor>
    <text evidence="3">Binds a dinuclear copper A center per subunit.</text>
</comment>
<comment type="subunit">
    <text evidence="1 3">Component of the cytochrome c oxidase (complex IV, CIV), a multisubunit enzyme composed of 14 subunits. The complex is composed of a catalytic core of 3 subunits MT-CO1, MT-CO2 and MT-CO3, encoded in the mitochondrial DNA, and 11 supernumerary subunits COX4I, COX5A, COX5B, COX6A, COX6B, COX6C, COX7A, COX7B, COX7C, COX8 and NDUFA4, which are encoded in the nuclear genome. The complex exists as a monomer or a dimer and forms supercomplexes (SCs) in the inner mitochondrial membrane with NADH-ubiquinone oxidoreductase (complex I, CI) and ubiquinol-cytochrome c oxidoreductase (cytochrome b-c1 complex, complex III, CIII), resulting in different assemblies (supercomplex SCI(1)III(2)IV(1) and megacomplex MCI(2)III(2)IV(2)) (By similarity). Found in a complex with TMEM177, COA6, COX18, COX20, SCO1 and SCO2. Interacts with TMEM177 in a COX20-dependent manner. Interacts with COX20. Interacts with COX16 (By similarity).</text>
</comment>
<comment type="subcellular location">
    <subcellularLocation>
        <location evidence="3">Mitochondrion inner membrane</location>
        <topology evidence="3">Multi-pass membrane protein</topology>
    </subcellularLocation>
</comment>
<comment type="similarity">
    <text evidence="4">Belongs to the cytochrome c oxidase subunit 2 family.</text>
</comment>